<sequence>MEEYQDQVYLELDISRQQHFLYPLIFREYIYGLVYGHDFNGSIFSENVDYDNKSSLLIVKRLITRMDQQNHLIISANDSKKKKFLSYNKNLYSQIISEGFAIVVEIPLSLQLNSSSEESKIIKYYKNLRSIHSIFPFFEDKLTYLNYVSDARIPYPIHLEILVQVFRYWAKDAPFFHLLRLFFYEYCNWNNLITPKKSISTFSKSNLRVFLFLYNFYVCEYESIFLFLRNKSSHLRLTSFSVLFERIYFYGKIEHFLEVFAKDFSSTLSFFKELFIHYVRYQEKYILASKNASLLMNKWKNYLIRLWQYHFDVWSQPRTIQINQFSEGSFHLLGYFSNVRLNRSAVRSQMLENSFLIEIVMKKLETIVPIIPLIRSLAKAKFCNVLGHPISKPVWADSSDFHIIDRFLRICRNLSHYYNGSSKKKSLYRVKYILRLSCIKTLARKHKSTVRAFLKRLGSEKLLEEFFTEEEEILSLVFQRASSTLQGFYRGRVWYLDIIFSNDLVNHE</sequence>
<keyword id="KW-0150">Chloroplast</keyword>
<keyword id="KW-0507">mRNA processing</keyword>
<keyword id="KW-0934">Plastid</keyword>
<keyword id="KW-0694">RNA-binding</keyword>
<keyword id="KW-0819">tRNA processing</keyword>
<reference key="1">
    <citation type="journal article" date="2004" name="Am. J. Bot.">
        <title>A phylogeny of legumes (Leguminosae) based on analysis of the plastid matK gene resolves many well-supported subclades within the family.</title>
        <authorList>
            <person name="Wojciechowski M.F."/>
            <person name="Lavin M."/>
            <person name="Sanderson M.J."/>
        </authorList>
        <dbReference type="AGRICOLA" id="IND43661289"/>
    </citation>
    <scope>NUCLEOTIDE SEQUENCE [GENOMIC DNA]</scope>
</reference>
<proteinExistence type="inferred from homology"/>
<gene>
    <name evidence="1" type="primary">matK</name>
</gene>
<dbReference type="EMBL" id="AY386943">
    <property type="protein sequence ID" value="AAQ92021.1"/>
    <property type="molecule type" value="Genomic_DNA"/>
</dbReference>
<dbReference type="GO" id="GO:0009507">
    <property type="term" value="C:chloroplast"/>
    <property type="evidence" value="ECO:0007669"/>
    <property type="project" value="UniProtKB-SubCell"/>
</dbReference>
<dbReference type="GO" id="GO:0003723">
    <property type="term" value="F:RNA binding"/>
    <property type="evidence" value="ECO:0007669"/>
    <property type="project" value="UniProtKB-KW"/>
</dbReference>
<dbReference type="GO" id="GO:0006397">
    <property type="term" value="P:mRNA processing"/>
    <property type="evidence" value="ECO:0007669"/>
    <property type="project" value="UniProtKB-KW"/>
</dbReference>
<dbReference type="GO" id="GO:0008380">
    <property type="term" value="P:RNA splicing"/>
    <property type="evidence" value="ECO:0007669"/>
    <property type="project" value="UniProtKB-UniRule"/>
</dbReference>
<dbReference type="GO" id="GO:0008033">
    <property type="term" value="P:tRNA processing"/>
    <property type="evidence" value="ECO:0007669"/>
    <property type="project" value="UniProtKB-KW"/>
</dbReference>
<dbReference type="HAMAP" id="MF_01390">
    <property type="entry name" value="MatK"/>
    <property type="match status" value="1"/>
</dbReference>
<dbReference type="InterPro" id="IPR024937">
    <property type="entry name" value="Domain_X"/>
</dbReference>
<dbReference type="InterPro" id="IPR002866">
    <property type="entry name" value="Maturase_MatK"/>
</dbReference>
<dbReference type="InterPro" id="IPR024942">
    <property type="entry name" value="Maturase_MatK_N"/>
</dbReference>
<dbReference type="PANTHER" id="PTHR34811">
    <property type="entry name" value="MATURASE K"/>
    <property type="match status" value="1"/>
</dbReference>
<dbReference type="PANTHER" id="PTHR34811:SF1">
    <property type="entry name" value="MATURASE K"/>
    <property type="match status" value="1"/>
</dbReference>
<dbReference type="Pfam" id="PF01348">
    <property type="entry name" value="Intron_maturas2"/>
    <property type="match status" value="1"/>
</dbReference>
<dbReference type="Pfam" id="PF01824">
    <property type="entry name" value="MatK_N"/>
    <property type="match status" value="1"/>
</dbReference>
<comment type="function">
    <text evidence="1">Usually encoded in the trnK tRNA gene intron. Probably assists in splicing its own and other chloroplast group II introns.</text>
</comment>
<comment type="subcellular location">
    <subcellularLocation>
        <location>Plastid</location>
        <location>Chloroplast</location>
    </subcellularLocation>
</comment>
<comment type="similarity">
    <text evidence="1">Belongs to the intron maturase 2 family. MatK subfamily.</text>
</comment>
<protein>
    <recommendedName>
        <fullName evidence="1">Maturase K</fullName>
    </recommendedName>
    <alternativeName>
        <fullName evidence="1">Intron maturase</fullName>
    </alternativeName>
</protein>
<evidence type="ECO:0000255" key="1">
    <source>
        <dbReference type="HAMAP-Rule" id="MF_01390"/>
    </source>
</evidence>
<geneLocation type="chloroplast"/>
<feature type="chain" id="PRO_0000143494" description="Maturase K">
    <location>
        <begin position="1"/>
        <end position="508"/>
    </location>
</feature>
<accession>Q5YJV9</accession>
<name>MATK_LUPCO</name>
<organism>
    <name type="scientific">Lupinus cosentinii</name>
    <name type="common">West Australian blue lupine</name>
    <name type="synonym">Sandplain lupine</name>
    <dbReference type="NCBI Taxonomy" id="53222"/>
    <lineage>
        <taxon>Eukaryota</taxon>
        <taxon>Viridiplantae</taxon>
        <taxon>Streptophyta</taxon>
        <taxon>Embryophyta</taxon>
        <taxon>Tracheophyta</taxon>
        <taxon>Spermatophyta</taxon>
        <taxon>Magnoliopsida</taxon>
        <taxon>eudicotyledons</taxon>
        <taxon>Gunneridae</taxon>
        <taxon>Pentapetalae</taxon>
        <taxon>rosids</taxon>
        <taxon>fabids</taxon>
        <taxon>Fabales</taxon>
        <taxon>Fabaceae</taxon>
        <taxon>Papilionoideae</taxon>
        <taxon>50 kb inversion clade</taxon>
        <taxon>genistoids sensu lato</taxon>
        <taxon>core genistoids</taxon>
        <taxon>Genisteae</taxon>
        <taxon>Lupinus</taxon>
    </lineage>
</organism>